<evidence type="ECO:0000255" key="1">
    <source>
        <dbReference type="HAMAP-Rule" id="MF_00225"/>
    </source>
</evidence>
<comment type="function">
    <text evidence="1">Catalyzes the conversion of dihydroorotate to orotate with quinone as electron acceptor.</text>
</comment>
<comment type="catalytic activity">
    <reaction evidence="1">
        <text>(S)-dihydroorotate + a quinone = orotate + a quinol</text>
        <dbReference type="Rhea" id="RHEA:30187"/>
        <dbReference type="ChEBI" id="CHEBI:24646"/>
        <dbReference type="ChEBI" id="CHEBI:30839"/>
        <dbReference type="ChEBI" id="CHEBI:30864"/>
        <dbReference type="ChEBI" id="CHEBI:132124"/>
        <dbReference type="EC" id="1.3.5.2"/>
    </reaction>
</comment>
<comment type="cofactor">
    <cofactor evidence="1">
        <name>FMN</name>
        <dbReference type="ChEBI" id="CHEBI:58210"/>
    </cofactor>
    <text evidence="1">Binds 1 FMN per subunit.</text>
</comment>
<comment type="pathway">
    <text evidence="1">Pyrimidine metabolism; UMP biosynthesis via de novo pathway; orotate from (S)-dihydroorotate (quinone route): step 1/1.</text>
</comment>
<comment type="subunit">
    <text evidence="1">Monomer.</text>
</comment>
<comment type="subcellular location">
    <subcellularLocation>
        <location evidence="1">Cell membrane</location>
        <topology evidence="1">Peripheral membrane protein</topology>
    </subcellularLocation>
</comment>
<comment type="similarity">
    <text evidence="1">Belongs to the dihydroorotate dehydrogenase family. Type 2 subfamily.</text>
</comment>
<feature type="chain" id="PRO_1000024160" description="Dihydroorotate dehydrogenase (quinone)">
    <location>
        <begin position="1"/>
        <end position="345"/>
    </location>
</feature>
<feature type="active site" description="Nucleophile" evidence="1">
    <location>
        <position position="178"/>
    </location>
</feature>
<feature type="binding site" evidence="1">
    <location>
        <begin position="65"/>
        <end position="69"/>
    </location>
    <ligand>
        <name>FMN</name>
        <dbReference type="ChEBI" id="CHEBI:58210"/>
    </ligand>
</feature>
<feature type="binding site" evidence="1">
    <location>
        <position position="69"/>
    </location>
    <ligand>
        <name>substrate</name>
    </ligand>
</feature>
<feature type="binding site" evidence="1">
    <location>
        <position position="89"/>
    </location>
    <ligand>
        <name>FMN</name>
        <dbReference type="ChEBI" id="CHEBI:58210"/>
    </ligand>
</feature>
<feature type="binding site" evidence="1">
    <location>
        <begin position="114"/>
        <end position="118"/>
    </location>
    <ligand>
        <name>substrate</name>
    </ligand>
</feature>
<feature type="binding site" evidence="1">
    <location>
        <position position="142"/>
    </location>
    <ligand>
        <name>FMN</name>
        <dbReference type="ChEBI" id="CHEBI:58210"/>
    </ligand>
</feature>
<feature type="binding site" evidence="1">
    <location>
        <position position="175"/>
    </location>
    <ligand>
        <name>FMN</name>
        <dbReference type="ChEBI" id="CHEBI:58210"/>
    </ligand>
</feature>
<feature type="binding site" evidence="1">
    <location>
        <position position="175"/>
    </location>
    <ligand>
        <name>substrate</name>
    </ligand>
</feature>
<feature type="binding site" evidence="1">
    <location>
        <position position="180"/>
    </location>
    <ligand>
        <name>substrate</name>
    </ligand>
</feature>
<feature type="binding site" evidence="1">
    <location>
        <position position="220"/>
    </location>
    <ligand>
        <name>FMN</name>
        <dbReference type="ChEBI" id="CHEBI:58210"/>
    </ligand>
</feature>
<feature type="binding site" evidence="1">
    <location>
        <position position="248"/>
    </location>
    <ligand>
        <name>FMN</name>
        <dbReference type="ChEBI" id="CHEBI:58210"/>
    </ligand>
</feature>
<feature type="binding site" evidence="1">
    <location>
        <begin position="249"/>
        <end position="250"/>
    </location>
    <ligand>
        <name>substrate</name>
    </ligand>
</feature>
<feature type="binding site" evidence="1">
    <location>
        <position position="271"/>
    </location>
    <ligand>
        <name>FMN</name>
        <dbReference type="ChEBI" id="CHEBI:58210"/>
    </ligand>
</feature>
<feature type="binding site" evidence="1">
    <location>
        <position position="300"/>
    </location>
    <ligand>
        <name>FMN</name>
        <dbReference type="ChEBI" id="CHEBI:58210"/>
    </ligand>
</feature>
<feature type="binding site" evidence="1">
    <location>
        <begin position="321"/>
        <end position="322"/>
    </location>
    <ligand>
        <name>FMN</name>
        <dbReference type="ChEBI" id="CHEBI:58210"/>
    </ligand>
</feature>
<keyword id="KW-1003">Cell membrane</keyword>
<keyword id="KW-0285">Flavoprotein</keyword>
<keyword id="KW-0288">FMN</keyword>
<keyword id="KW-0472">Membrane</keyword>
<keyword id="KW-0560">Oxidoreductase</keyword>
<keyword id="KW-0665">Pyrimidine biosynthesis</keyword>
<dbReference type="EC" id="1.3.5.2" evidence="1"/>
<dbReference type="EMBL" id="CP000526">
    <property type="protein sequence ID" value="ABM51652.1"/>
    <property type="molecule type" value="Genomic_DNA"/>
</dbReference>
<dbReference type="RefSeq" id="WP_004193208.1">
    <property type="nucleotide sequence ID" value="NC_008785.1"/>
</dbReference>
<dbReference type="SMR" id="A1V4A5"/>
<dbReference type="KEGG" id="bmv:BMASAVP1_A1736"/>
<dbReference type="HOGENOM" id="CLU_013640_2_0_4"/>
<dbReference type="UniPathway" id="UPA00070">
    <property type="reaction ID" value="UER00946"/>
</dbReference>
<dbReference type="GO" id="GO:0005737">
    <property type="term" value="C:cytoplasm"/>
    <property type="evidence" value="ECO:0007669"/>
    <property type="project" value="InterPro"/>
</dbReference>
<dbReference type="GO" id="GO:0005886">
    <property type="term" value="C:plasma membrane"/>
    <property type="evidence" value="ECO:0007669"/>
    <property type="project" value="UniProtKB-SubCell"/>
</dbReference>
<dbReference type="GO" id="GO:0106430">
    <property type="term" value="F:dihydroorotate dehydrogenase (quinone) activity"/>
    <property type="evidence" value="ECO:0007669"/>
    <property type="project" value="UniProtKB-EC"/>
</dbReference>
<dbReference type="GO" id="GO:0006207">
    <property type="term" value="P:'de novo' pyrimidine nucleobase biosynthetic process"/>
    <property type="evidence" value="ECO:0007669"/>
    <property type="project" value="InterPro"/>
</dbReference>
<dbReference type="GO" id="GO:0044205">
    <property type="term" value="P:'de novo' UMP biosynthetic process"/>
    <property type="evidence" value="ECO:0007669"/>
    <property type="project" value="UniProtKB-UniRule"/>
</dbReference>
<dbReference type="CDD" id="cd04738">
    <property type="entry name" value="DHOD_2_like"/>
    <property type="match status" value="1"/>
</dbReference>
<dbReference type="FunFam" id="3.20.20.70:FF:000028">
    <property type="entry name" value="Dihydroorotate dehydrogenase (quinone)"/>
    <property type="match status" value="1"/>
</dbReference>
<dbReference type="Gene3D" id="3.20.20.70">
    <property type="entry name" value="Aldolase class I"/>
    <property type="match status" value="1"/>
</dbReference>
<dbReference type="HAMAP" id="MF_00225">
    <property type="entry name" value="DHO_dh_type2"/>
    <property type="match status" value="1"/>
</dbReference>
<dbReference type="InterPro" id="IPR013785">
    <property type="entry name" value="Aldolase_TIM"/>
</dbReference>
<dbReference type="InterPro" id="IPR050074">
    <property type="entry name" value="DHO_dehydrogenase"/>
</dbReference>
<dbReference type="InterPro" id="IPR012135">
    <property type="entry name" value="Dihydroorotate_DH_1_2"/>
</dbReference>
<dbReference type="InterPro" id="IPR005719">
    <property type="entry name" value="Dihydroorotate_DH_2"/>
</dbReference>
<dbReference type="InterPro" id="IPR005720">
    <property type="entry name" value="Dihydroorotate_DH_cat"/>
</dbReference>
<dbReference type="InterPro" id="IPR001295">
    <property type="entry name" value="Dihydroorotate_DH_CS"/>
</dbReference>
<dbReference type="NCBIfam" id="NF003644">
    <property type="entry name" value="PRK05286.1-1"/>
    <property type="match status" value="1"/>
</dbReference>
<dbReference type="NCBIfam" id="NF003645">
    <property type="entry name" value="PRK05286.1-2"/>
    <property type="match status" value="1"/>
</dbReference>
<dbReference type="NCBIfam" id="NF003646">
    <property type="entry name" value="PRK05286.1-4"/>
    <property type="match status" value="1"/>
</dbReference>
<dbReference type="NCBIfam" id="NF003652">
    <property type="entry name" value="PRK05286.2-5"/>
    <property type="match status" value="1"/>
</dbReference>
<dbReference type="NCBIfam" id="TIGR01036">
    <property type="entry name" value="pyrD_sub2"/>
    <property type="match status" value="1"/>
</dbReference>
<dbReference type="PANTHER" id="PTHR48109:SF4">
    <property type="entry name" value="DIHYDROOROTATE DEHYDROGENASE (QUINONE), MITOCHONDRIAL"/>
    <property type="match status" value="1"/>
</dbReference>
<dbReference type="PANTHER" id="PTHR48109">
    <property type="entry name" value="DIHYDROOROTATE DEHYDROGENASE (QUINONE), MITOCHONDRIAL-RELATED"/>
    <property type="match status" value="1"/>
</dbReference>
<dbReference type="Pfam" id="PF01180">
    <property type="entry name" value="DHO_dh"/>
    <property type="match status" value="1"/>
</dbReference>
<dbReference type="PIRSF" id="PIRSF000164">
    <property type="entry name" value="DHO_oxidase"/>
    <property type="match status" value="1"/>
</dbReference>
<dbReference type="SUPFAM" id="SSF51395">
    <property type="entry name" value="FMN-linked oxidoreductases"/>
    <property type="match status" value="1"/>
</dbReference>
<dbReference type="PROSITE" id="PS00911">
    <property type="entry name" value="DHODEHASE_1"/>
    <property type="match status" value="1"/>
</dbReference>
<dbReference type="PROSITE" id="PS00912">
    <property type="entry name" value="DHODEHASE_2"/>
    <property type="match status" value="1"/>
</dbReference>
<proteinExistence type="inferred from homology"/>
<name>PYRD_BURMS</name>
<gene>
    <name evidence="1" type="primary">pyrD</name>
    <name type="ordered locus">BMASAVP1_A1736</name>
</gene>
<accession>A1V4A5</accession>
<organism>
    <name type="scientific">Burkholderia mallei (strain SAVP1)</name>
    <dbReference type="NCBI Taxonomy" id="320388"/>
    <lineage>
        <taxon>Bacteria</taxon>
        <taxon>Pseudomonadati</taxon>
        <taxon>Pseudomonadota</taxon>
        <taxon>Betaproteobacteria</taxon>
        <taxon>Burkholderiales</taxon>
        <taxon>Burkholderiaceae</taxon>
        <taxon>Burkholderia</taxon>
        <taxon>pseudomallei group</taxon>
    </lineage>
</organism>
<protein>
    <recommendedName>
        <fullName evidence="1">Dihydroorotate dehydrogenase (quinone)</fullName>
        <ecNumber evidence="1">1.3.5.2</ecNumber>
    </recommendedName>
    <alternativeName>
        <fullName evidence="1">DHOdehase</fullName>
        <shortName evidence="1">DHOD</shortName>
        <shortName evidence="1">DHODase</shortName>
    </alternativeName>
    <alternativeName>
        <fullName evidence="1">Dihydroorotate oxidase</fullName>
    </alternativeName>
</protein>
<sequence>MFSSLYPLARASLFKMDAEDAHHLTLRMLGAAGRTGLACALSPRVPDAPRTVMGLSFRNPVGLAAGLDKDGAAIDGFAALGFGFIEVGTVTPRAQPGNPRPRMFRLPEADAIINRMGFNNSGVDQFVKNVQAARYRGVLGLNIGKNADTPIERAADDYLYCLERVYPFASYVTINISSPNTKNLRQLQGAGELDALLAALKDKQRRLADLHGKLVPLALKIAPDLDDEQVKEIAATLLRHDIEGVIATNTTLSREAVKGLPHADEAGGLSGRPVFDASNAVIRKLRAELGDAVPIIGVGGIFSGEDARAKLAAGAALVQLYTGFIYRGPALVAECVKAIARGEAR</sequence>
<reference key="1">
    <citation type="journal article" date="2010" name="Genome Biol. Evol.">
        <title>Continuing evolution of Burkholderia mallei through genome reduction and large-scale rearrangements.</title>
        <authorList>
            <person name="Losada L."/>
            <person name="Ronning C.M."/>
            <person name="DeShazer D."/>
            <person name="Woods D."/>
            <person name="Fedorova N."/>
            <person name="Kim H.S."/>
            <person name="Shabalina S.A."/>
            <person name="Pearson T.R."/>
            <person name="Brinkac L."/>
            <person name="Tan P."/>
            <person name="Nandi T."/>
            <person name="Crabtree J."/>
            <person name="Badger J."/>
            <person name="Beckstrom-Sternberg S."/>
            <person name="Saqib M."/>
            <person name="Schutzer S.E."/>
            <person name="Keim P."/>
            <person name="Nierman W.C."/>
        </authorList>
    </citation>
    <scope>NUCLEOTIDE SEQUENCE [LARGE SCALE GENOMIC DNA]</scope>
    <source>
        <strain>SAVP1</strain>
    </source>
</reference>